<organism>
    <name type="scientific">Danio rerio</name>
    <name type="common">Zebrafish</name>
    <name type="synonym">Brachydanio rerio</name>
    <dbReference type="NCBI Taxonomy" id="7955"/>
    <lineage>
        <taxon>Eukaryota</taxon>
        <taxon>Metazoa</taxon>
        <taxon>Chordata</taxon>
        <taxon>Craniata</taxon>
        <taxon>Vertebrata</taxon>
        <taxon>Euteleostomi</taxon>
        <taxon>Actinopterygii</taxon>
        <taxon>Neopterygii</taxon>
        <taxon>Teleostei</taxon>
        <taxon>Ostariophysi</taxon>
        <taxon>Cypriniformes</taxon>
        <taxon>Danionidae</taxon>
        <taxon>Danioninae</taxon>
        <taxon>Danio</taxon>
    </lineage>
</organism>
<accession>Q6P104</accession>
<accession>Q6P7D9</accession>
<comment type="function">
    <text evidence="1 2 3">RNA reader protein, which recognizes and binds specific RNAs, thereby regulating RNA metabolic processes, such as pre-mRNA splicing, circular RNA (circRNA) formation, mRNA export, mRNA stability and/or translation (PubMed:28867488). Involved in various cellular processes, such as mRNA storage into stress granules, apoptosis, interferon response, glial cell fate and development (By similarity). Binds to the 5'-NACUAAY-N(1,20)-UAAY-3' RNA core sequence (By similarity). Acts as a mRNA modification reader that specifically recognizes and binds mRNA transcripts modified by internal N(7)-methylguanine (m7G) (By similarity). Promotes the formation of circular RNAs (circRNAs): acts by binding to sites flanking circRNA-forming exons (By similarity). CircRNAs are produced by back-splicing circularization of pre-mRNAs (By similarity). Required to protect and promote stability of mRNAs which promotes oligodendrocyte differentiation (By similarity). Acts as an important regulator of muscle development: required during early skeletal myofibril formation by regulating the accumulation of the muscle-specific tropomyosin-3 (tpm3) transcripts (PubMed:28867488).</text>
</comment>
<comment type="subunit">
    <text evidence="2">Homodimer; does not require RNA to homodimerize.</text>
</comment>
<comment type="subcellular location">
    <subcellularLocation>
        <location evidence="2">Cytoplasm</location>
    </subcellularLocation>
    <subcellularLocation>
        <location evidence="2">Nucleus</location>
    </subcellularLocation>
</comment>
<comment type="alternative products">
    <event type="alternative splicing"/>
    <isoform>
        <id>Q6P104-1</id>
        <name>1</name>
        <sequence type="displayed"/>
    </isoform>
    <isoform>
        <id>Q6P104-2</id>
        <name>2</name>
        <sequence type="described" ref="VSP_019205"/>
    </isoform>
</comment>
<comment type="similarity">
    <text evidence="7">Belongs to the quaking family.</text>
</comment>
<reference key="1">
    <citation type="submission" date="2002-06" db="EMBL/GenBank/DDBJ databases">
        <title>Temporal and spatial expression of a novel quaking-related gene, qkr, in zebrafish.</title>
        <authorList>
            <person name="Sugiyama T."/>
            <person name="Abe K."/>
            <person name="Yasuda K."/>
            <person name="Inoue K."/>
        </authorList>
    </citation>
    <scope>NUCLEOTIDE SEQUENCE [MRNA] (ISOFORM 1)</scope>
</reference>
<reference key="2">
    <citation type="submission" date="2004-01" db="EMBL/GenBank/DDBJ databases">
        <authorList>
            <consortium name="NIH - Zebrafish Gene Collection (ZGC) project"/>
        </authorList>
    </citation>
    <scope>NUCLEOTIDE SEQUENCE [LARGE SCALE MRNA] (ISOFORMS 1 AND 2)</scope>
    <source>
        <tissue>Embryo</tissue>
    </source>
</reference>
<reference key="3">
    <citation type="journal article" date="2017" name="Dev. Cell">
        <title>Quaking RNA-binding proteins control early myofibril formation by modulating tropomyosin.</title>
        <authorList>
            <person name="Bonnet A."/>
            <person name="Lambert G."/>
            <person name="Ernest S."/>
            <person name="Dutrieux F.X."/>
            <person name="Coulpier F."/>
            <person name="Lemoine S."/>
            <person name="Lobbardi R."/>
            <person name="Rosa F.M."/>
        </authorList>
    </citation>
    <scope>FUNCTION</scope>
</reference>
<feature type="chain" id="PRO_0000239379" description="Protein quaking-B">
    <location>
        <begin position="1"/>
        <end position="319"/>
    </location>
</feature>
<feature type="domain" description="KH">
    <location>
        <begin position="87"/>
        <end position="153"/>
    </location>
</feature>
<feature type="short sequence motif" description="SH3-binding">
    <location>
        <begin position="276"/>
        <end position="279"/>
    </location>
</feature>
<feature type="splice variant" id="VSP_019205" description="In isoform 2." evidence="6">
    <location>
        <position position="213"/>
    </location>
</feature>
<dbReference type="EMBL" id="AB086654">
    <property type="protein sequence ID" value="BAD23948.1"/>
    <property type="molecule type" value="mRNA"/>
</dbReference>
<dbReference type="EMBL" id="BC061709">
    <property type="protein sequence ID" value="AAH61709.1"/>
    <property type="molecule type" value="mRNA"/>
</dbReference>
<dbReference type="EMBL" id="BC065344">
    <property type="protein sequence ID" value="AAH65344.1"/>
    <property type="molecule type" value="mRNA"/>
</dbReference>
<dbReference type="RefSeq" id="NP_957136.2">
    <molecule id="Q6P104-1"/>
    <property type="nucleotide sequence ID" value="NM_200842.2"/>
</dbReference>
<dbReference type="RefSeq" id="XP_005156412.1">
    <molecule id="Q6P104-2"/>
    <property type="nucleotide sequence ID" value="XM_005156355.5"/>
</dbReference>
<dbReference type="SMR" id="Q6P104"/>
<dbReference type="FunCoup" id="Q6P104">
    <property type="interactions" value="1818"/>
</dbReference>
<dbReference type="STRING" id="7955.ENSDARP00000020217"/>
<dbReference type="PaxDb" id="7955-ENSDARP00000020217"/>
<dbReference type="Ensembl" id="ENSDART00000027034">
    <molecule id="Q6P104-1"/>
    <property type="protein sequence ID" value="ENSDARP00000020217"/>
    <property type="gene ID" value="ENSDARG00000010018"/>
</dbReference>
<dbReference type="GeneID" id="393815"/>
<dbReference type="KEGG" id="dre:393815"/>
<dbReference type="AGR" id="ZFIN:ZDB-GENE-040426-1462"/>
<dbReference type="CTD" id="393815"/>
<dbReference type="ZFIN" id="ZDB-GENE-040426-1462">
    <property type="gene designation" value="qki2"/>
</dbReference>
<dbReference type="eggNOG" id="KOG1588">
    <property type="taxonomic scope" value="Eukaryota"/>
</dbReference>
<dbReference type="HOGENOM" id="CLU_046595_2_0_1"/>
<dbReference type="InParanoid" id="Q6P104"/>
<dbReference type="OMA" id="KIRRQDM"/>
<dbReference type="OrthoDB" id="6777263at2759"/>
<dbReference type="PhylomeDB" id="Q6P104"/>
<dbReference type="TreeFam" id="TF314878"/>
<dbReference type="PRO" id="PR:Q6P104"/>
<dbReference type="Proteomes" id="UP000000437">
    <property type="component" value="Chromosome 12"/>
</dbReference>
<dbReference type="Bgee" id="ENSDARG00000010018">
    <property type="expression patterns" value="Expressed in brain and 42 other cell types or tissues"/>
</dbReference>
<dbReference type="ExpressionAtlas" id="Q6P104">
    <property type="expression patterns" value="baseline"/>
</dbReference>
<dbReference type="GO" id="GO:0005737">
    <property type="term" value="C:cytoplasm"/>
    <property type="evidence" value="ECO:0007669"/>
    <property type="project" value="UniProtKB-SubCell"/>
</dbReference>
<dbReference type="GO" id="GO:0005634">
    <property type="term" value="C:nucleus"/>
    <property type="evidence" value="ECO:0000318"/>
    <property type="project" value="GO_Central"/>
</dbReference>
<dbReference type="GO" id="GO:0003730">
    <property type="term" value="F:mRNA 3'-UTR binding"/>
    <property type="evidence" value="ECO:0000314"/>
    <property type="project" value="UniProtKB"/>
</dbReference>
<dbReference type="GO" id="GO:0003729">
    <property type="term" value="F:mRNA binding"/>
    <property type="evidence" value="ECO:0000318"/>
    <property type="project" value="GO_Central"/>
</dbReference>
<dbReference type="GO" id="GO:0017124">
    <property type="term" value="F:SH3 domain binding"/>
    <property type="evidence" value="ECO:0007669"/>
    <property type="project" value="UniProtKB-KW"/>
</dbReference>
<dbReference type="GO" id="GO:0051028">
    <property type="term" value="P:mRNA transport"/>
    <property type="evidence" value="ECO:0007669"/>
    <property type="project" value="UniProtKB-KW"/>
</dbReference>
<dbReference type="GO" id="GO:0045650">
    <property type="term" value="P:negative regulation of macrophage differentiation"/>
    <property type="evidence" value="ECO:0000250"/>
    <property type="project" value="UniProtKB"/>
</dbReference>
<dbReference type="GO" id="GO:0048710">
    <property type="term" value="P:regulation of astrocyte differentiation"/>
    <property type="evidence" value="ECO:0000250"/>
    <property type="project" value="UniProtKB"/>
</dbReference>
<dbReference type="GO" id="GO:0048024">
    <property type="term" value="P:regulation of mRNA splicing, via spliceosome"/>
    <property type="evidence" value="ECO:0000318"/>
    <property type="project" value="GO_Central"/>
</dbReference>
<dbReference type="GO" id="GO:0006417">
    <property type="term" value="P:regulation of translation"/>
    <property type="evidence" value="ECO:0007669"/>
    <property type="project" value="UniProtKB-KW"/>
</dbReference>
<dbReference type="GO" id="GO:0014866">
    <property type="term" value="P:skeletal myofibril assembly"/>
    <property type="evidence" value="ECO:0000316"/>
    <property type="project" value="ZFIN"/>
</dbReference>
<dbReference type="GO" id="GO:0160091">
    <property type="term" value="P:spliceosome-depend formation of circular RNA"/>
    <property type="evidence" value="ECO:0000250"/>
    <property type="project" value="UniProtKB"/>
</dbReference>
<dbReference type="CDD" id="cd22465">
    <property type="entry name" value="KH-I_Hqk"/>
    <property type="match status" value="1"/>
</dbReference>
<dbReference type="FunFam" id="1.20.5.4010:FF:000001">
    <property type="entry name" value="protein quaking isoform X1"/>
    <property type="match status" value="1"/>
</dbReference>
<dbReference type="FunFam" id="3.30.1370.10:FF:000055">
    <property type="entry name" value="protein quaking isoform X1"/>
    <property type="match status" value="1"/>
</dbReference>
<dbReference type="Gene3D" id="1.20.5.4010">
    <property type="match status" value="1"/>
</dbReference>
<dbReference type="Gene3D" id="3.30.1370.10">
    <property type="entry name" value="K Homology domain, type 1"/>
    <property type="match status" value="1"/>
</dbReference>
<dbReference type="InterPro" id="IPR045071">
    <property type="entry name" value="BBP-like"/>
</dbReference>
<dbReference type="InterPro" id="IPR055256">
    <property type="entry name" value="KH_1_KHDC4/BBP-like"/>
</dbReference>
<dbReference type="InterPro" id="IPR004087">
    <property type="entry name" value="KH_dom"/>
</dbReference>
<dbReference type="InterPro" id="IPR036612">
    <property type="entry name" value="KH_dom_type_1_sf"/>
</dbReference>
<dbReference type="InterPro" id="IPR032377">
    <property type="entry name" value="STAR_dimer"/>
</dbReference>
<dbReference type="PANTHER" id="PTHR11208:SF152">
    <property type="entry name" value="PROTEIN QUAKING-B-RELATED"/>
    <property type="match status" value="1"/>
</dbReference>
<dbReference type="PANTHER" id="PTHR11208">
    <property type="entry name" value="RNA-BINDING PROTEIN RELATED"/>
    <property type="match status" value="1"/>
</dbReference>
<dbReference type="Pfam" id="PF22675">
    <property type="entry name" value="KH-I_KHDC4-BBP"/>
    <property type="match status" value="1"/>
</dbReference>
<dbReference type="Pfam" id="PF16544">
    <property type="entry name" value="STAR_dimer"/>
    <property type="match status" value="1"/>
</dbReference>
<dbReference type="SMART" id="SM00322">
    <property type="entry name" value="KH"/>
    <property type="match status" value="1"/>
</dbReference>
<dbReference type="SUPFAM" id="SSF54791">
    <property type="entry name" value="Eukaryotic type KH-domain (KH-domain type I)"/>
    <property type="match status" value="1"/>
</dbReference>
<gene>
    <name type="primary">qki2</name>
    <name type="synonym">qkib</name>
    <name evidence="4" type="synonym">qkic</name>
    <name evidence="5" type="synonym">qkr</name>
    <name type="ORF">zgc:65890</name>
    <name type="ORF">zgc:77340</name>
</gene>
<keyword id="KW-0025">Alternative splicing</keyword>
<keyword id="KW-0963">Cytoplasm</keyword>
<keyword id="KW-0217">Developmental protein</keyword>
<keyword id="KW-0221">Differentiation</keyword>
<keyword id="KW-0507">mRNA processing</keyword>
<keyword id="KW-0508">mRNA splicing</keyword>
<keyword id="KW-0509">mRNA transport</keyword>
<keyword id="KW-0539">Nucleus</keyword>
<keyword id="KW-1185">Reference proteome</keyword>
<keyword id="KW-0694">RNA-binding</keyword>
<keyword id="KW-0729">SH3-binding</keyword>
<keyword id="KW-0810">Translation regulation</keyword>
<keyword id="KW-0813">Transport</keyword>
<name>QKIB_DANRE</name>
<sequence length="319" mass="35256">MVGEMETKEKPKPTPDYLMQLMNDKKLMSSLPNFCGIFNHLERLLDEEIGRVRKDMYNDTLNGSTDKRTSELPDAVGPIAQLQEKLYVPVKEYPDFNFVGRILGPRGLTAKQLEAETGCKIMVRGKGSMRDKKKEEQNRGKPNWEHLNEDLHVLITVEDSQNRAEIKLKRAVEEVKKLLVPAAEGEDSLKKMQLMELAILNGTYRDANIKSPALAFSLAATAQAPRIMTGPTPVMPNAALRTPAPTAPTLMPLIRQIQTSALMPTGTPHPTATLLPQTPESGIIYAPYDYPYALAPATSILEYPIDSSGVLGMAFPTKG</sequence>
<evidence type="ECO:0000250" key="1">
    <source>
        <dbReference type="UniProtKB" id="Q96PU8"/>
    </source>
</evidence>
<evidence type="ECO:0000250" key="2">
    <source>
        <dbReference type="UniProtKB" id="Q9QYS9"/>
    </source>
</evidence>
<evidence type="ECO:0000269" key="3">
    <source>
    </source>
</evidence>
<evidence type="ECO:0000303" key="4">
    <source>
    </source>
</evidence>
<evidence type="ECO:0000303" key="5">
    <source ref="1"/>
</evidence>
<evidence type="ECO:0000303" key="6">
    <source ref="2"/>
</evidence>
<evidence type="ECO:0000305" key="7"/>
<proteinExistence type="evidence at transcript level"/>
<protein>
    <recommendedName>
        <fullName>Protein quaking-B</fullName>
    </recommendedName>
    <alternativeName>
        <fullName evidence="5">Quaking-related protein</fullName>
    </alternativeName>
</protein>